<name>ISPF_ECO24</name>
<keyword id="KW-0414">Isoprene biosynthesis</keyword>
<keyword id="KW-0456">Lyase</keyword>
<keyword id="KW-0479">Metal-binding</keyword>
<keyword id="KW-1185">Reference proteome</keyword>
<protein>
    <recommendedName>
        <fullName evidence="1">2-C-methyl-D-erythritol 2,4-cyclodiphosphate synthase</fullName>
        <shortName evidence="1">MECDP-synthase</shortName>
        <shortName evidence="1">MECPP-synthase</shortName>
        <shortName evidence="1">MECPS</shortName>
        <ecNumber evidence="1">4.6.1.12</ecNumber>
    </recommendedName>
</protein>
<feature type="chain" id="PRO_1000057708" description="2-C-methyl-D-erythritol 2,4-cyclodiphosphate synthase">
    <location>
        <begin position="1"/>
        <end position="159"/>
    </location>
</feature>
<feature type="binding site" evidence="1">
    <location>
        <begin position="8"/>
        <end position="10"/>
    </location>
    <ligand>
        <name>4-CDP-2-C-methyl-D-erythritol 2-phosphate</name>
        <dbReference type="ChEBI" id="CHEBI:57919"/>
    </ligand>
</feature>
<feature type="binding site" evidence="1">
    <location>
        <position position="8"/>
    </location>
    <ligand>
        <name>a divalent metal cation</name>
        <dbReference type="ChEBI" id="CHEBI:60240"/>
    </ligand>
</feature>
<feature type="binding site" evidence="1">
    <location>
        <position position="10"/>
    </location>
    <ligand>
        <name>a divalent metal cation</name>
        <dbReference type="ChEBI" id="CHEBI:60240"/>
    </ligand>
</feature>
<feature type="binding site" evidence="1">
    <location>
        <begin position="34"/>
        <end position="35"/>
    </location>
    <ligand>
        <name>4-CDP-2-C-methyl-D-erythritol 2-phosphate</name>
        <dbReference type="ChEBI" id="CHEBI:57919"/>
    </ligand>
</feature>
<feature type="binding site" evidence="1">
    <location>
        <position position="42"/>
    </location>
    <ligand>
        <name>a divalent metal cation</name>
        <dbReference type="ChEBI" id="CHEBI:60240"/>
    </ligand>
</feature>
<feature type="binding site" evidence="1">
    <location>
        <begin position="56"/>
        <end position="58"/>
    </location>
    <ligand>
        <name>4-CDP-2-C-methyl-D-erythritol 2-phosphate</name>
        <dbReference type="ChEBI" id="CHEBI:57919"/>
    </ligand>
</feature>
<feature type="binding site" evidence="1">
    <location>
        <begin position="61"/>
        <end position="65"/>
    </location>
    <ligand>
        <name>4-CDP-2-C-methyl-D-erythritol 2-phosphate</name>
        <dbReference type="ChEBI" id="CHEBI:57919"/>
    </ligand>
</feature>
<feature type="binding site" evidence="1">
    <location>
        <begin position="100"/>
        <end position="106"/>
    </location>
    <ligand>
        <name>4-CDP-2-C-methyl-D-erythritol 2-phosphate</name>
        <dbReference type="ChEBI" id="CHEBI:57919"/>
    </ligand>
</feature>
<feature type="binding site" evidence="1">
    <location>
        <begin position="132"/>
        <end position="135"/>
    </location>
    <ligand>
        <name>4-CDP-2-C-methyl-D-erythritol 2-phosphate</name>
        <dbReference type="ChEBI" id="CHEBI:57919"/>
    </ligand>
</feature>
<feature type="binding site" evidence="1">
    <location>
        <position position="139"/>
    </location>
    <ligand>
        <name>4-CDP-2-C-methyl-D-erythritol 2-phosphate</name>
        <dbReference type="ChEBI" id="CHEBI:57919"/>
    </ligand>
</feature>
<feature type="binding site" evidence="1">
    <location>
        <position position="142"/>
    </location>
    <ligand>
        <name>4-CDP-2-C-methyl-D-erythritol 2-phosphate</name>
        <dbReference type="ChEBI" id="CHEBI:57919"/>
    </ligand>
</feature>
<feature type="site" description="Transition state stabilizer" evidence="1">
    <location>
        <position position="34"/>
    </location>
</feature>
<feature type="site" description="Transition state stabilizer" evidence="1">
    <location>
        <position position="133"/>
    </location>
</feature>
<organism>
    <name type="scientific">Escherichia coli O139:H28 (strain E24377A / ETEC)</name>
    <dbReference type="NCBI Taxonomy" id="331111"/>
    <lineage>
        <taxon>Bacteria</taxon>
        <taxon>Pseudomonadati</taxon>
        <taxon>Pseudomonadota</taxon>
        <taxon>Gammaproteobacteria</taxon>
        <taxon>Enterobacterales</taxon>
        <taxon>Enterobacteriaceae</taxon>
        <taxon>Escherichia</taxon>
    </lineage>
</organism>
<accession>A7ZQJ0</accession>
<gene>
    <name evidence="1" type="primary">ispF</name>
    <name type="ordered locus">EcE24377A_3047</name>
</gene>
<comment type="function">
    <text evidence="1">Involved in the biosynthesis of isopentenyl diphosphate (IPP) and dimethylallyl diphosphate (DMAPP), two major building blocks of isoprenoid compounds. Catalyzes the conversion of 4-diphosphocytidyl-2-C-methyl-D-erythritol 2-phosphate (CDP-ME2P) to 2-C-methyl-D-erythritol 2,4-cyclodiphosphate (ME-CPP) with a corresponding release of cytidine 5-monophosphate (CMP).</text>
</comment>
<comment type="catalytic activity">
    <reaction evidence="1">
        <text>4-CDP-2-C-methyl-D-erythritol 2-phosphate = 2-C-methyl-D-erythritol 2,4-cyclic diphosphate + CMP</text>
        <dbReference type="Rhea" id="RHEA:23864"/>
        <dbReference type="ChEBI" id="CHEBI:57919"/>
        <dbReference type="ChEBI" id="CHEBI:58483"/>
        <dbReference type="ChEBI" id="CHEBI:60377"/>
        <dbReference type="EC" id="4.6.1.12"/>
    </reaction>
</comment>
<comment type="cofactor">
    <cofactor evidence="1">
        <name>a divalent metal cation</name>
        <dbReference type="ChEBI" id="CHEBI:60240"/>
    </cofactor>
    <text evidence="1">Binds 1 divalent metal cation per subunit.</text>
</comment>
<comment type="pathway">
    <text evidence="1">Isoprenoid biosynthesis; isopentenyl diphosphate biosynthesis via DXP pathway; isopentenyl diphosphate from 1-deoxy-D-xylulose 5-phosphate: step 4/6.</text>
</comment>
<comment type="subunit">
    <text evidence="1">Homotrimer.</text>
</comment>
<comment type="similarity">
    <text evidence="1">Belongs to the IspF family.</text>
</comment>
<reference key="1">
    <citation type="journal article" date="2008" name="J. Bacteriol.">
        <title>The pangenome structure of Escherichia coli: comparative genomic analysis of E. coli commensal and pathogenic isolates.</title>
        <authorList>
            <person name="Rasko D.A."/>
            <person name="Rosovitz M.J."/>
            <person name="Myers G.S.A."/>
            <person name="Mongodin E.F."/>
            <person name="Fricke W.F."/>
            <person name="Gajer P."/>
            <person name="Crabtree J."/>
            <person name="Sebaihia M."/>
            <person name="Thomson N.R."/>
            <person name="Chaudhuri R."/>
            <person name="Henderson I.R."/>
            <person name="Sperandio V."/>
            <person name="Ravel J."/>
        </authorList>
    </citation>
    <scope>NUCLEOTIDE SEQUENCE [LARGE SCALE GENOMIC DNA]</scope>
    <source>
        <strain>E24377A / ETEC</strain>
    </source>
</reference>
<evidence type="ECO:0000255" key="1">
    <source>
        <dbReference type="HAMAP-Rule" id="MF_00107"/>
    </source>
</evidence>
<proteinExistence type="inferred from homology"/>
<sequence>MRIGHGFDVHAFGGEGPIIIGGVRIPYEKGLLAHSDGDVALHALTDALLGAAALGDIGKLFPDTDPAFKGADSRELLREAWRRIQAKGYTLGNVDVTIIAQAPKMLPHIPQMRVFIAEDLGCHMDDVNVKATTTEKLGFTGRGEGIACEAVALLIKATK</sequence>
<dbReference type="EC" id="4.6.1.12" evidence="1"/>
<dbReference type="EMBL" id="CP000800">
    <property type="protein sequence ID" value="ABV18574.1"/>
    <property type="molecule type" value="Genomic_DNA"/>
</dbReference>
<dbReference type="RefSeq" id="WP_001219242.1">
    <property type="nucleotide sequence ID" value="NC_009801.1"/>
</dbReference>
<dbReference type="SMR" id="A7ZQJ0"/>
<dbReference type="GeneID" id="93779260"/>
<dbReference type="KEGG" id="ecw:EcE24377A_3047"/>
<dbReference type="HOGENOM" id="CLU_084630_2_0_6"/>
<dbReference type="UniPathway" id="UPA00056">
    <property type="reaction ID" value="UER00095"/>
</dbReference>
<dbReference type="Proteomes" id="UP000001122">
    <property type="component" value="Chromosome"/>
</dbReference>
<dbReference type="GO" id="GO:0008685">
    <property type="term" value="F:2-C-methyl-D-erythritol 2,4-cyclodiphosphate synthase activity"/>
    <property type="evidence" value="ECO:0007669"/>
    <property type="project" value="UniProtKB-UniRule"/>
</dbReference>
<dbReference type="GO" id="GO:0046872">
    <property type="term" value="F:metal ion binding"/>
    <property type="evidence" value="ECO:0007669"/>
    <property type="project" value="UniProtKB-KW"/>
</dbReference>
<dbReference type="GO" id="GO:0019288">
    <property type="term" value="P:isopentenyl diphosphate biosynthetic process, methylerythritol 4-phosphate pathway"/>
    <property type="evidence" value="ECO:0007669"/>
    <property type="project" value="UniProtKB-UniRule"/>
</dbReference>
<dbReference type="GO" id="GO:0016114">
    <property type="term" value="P:terpenoid biosynthetic process"/>
    <property type="evidence" value="ECO:0007669"/>
    <property type="project" value="InterPro"/>
</dbReference>
<dbReference type="CDD" id="cd00554">
    <property type="entry name" value="MECDP_synthase"/>
    <property type="match status" value="1"/>
</dbReference>
<dbReference type="FunFam" id="3.30.1330.50:FF:000001">
    <property type="entry name" value="2-C-methyl-D-erythritol 2,4-cyclodiphosphate synthase"/>
    <property type="match status" value="1"/>
</dbReference>
<dbReference type="Gene3D" id="3.30.1330.50">
    <property type="entry name" value="2-C-methyl-D-erythritol 2,4-cyclodiphosphate synthase"/>
    <property type="match status" value="1"/>
</dbReference>
<dbReference type="HAMAP" id="MF_00107">
    <property type="entry name" value="IspF"/>
    <property type="match status" value="1"/>
</dbReference>
<dbReference type="InterPro" id="IPR003526">
    <property type="entry name" value="MECDP_synthase"/>
</dbReference>
<dbReference type="InterPro" id="IPR020555">
    <property type="entry name" value="MECDP_synthase_CS"/>
</dbReference>
<dbReference type="InterPro" id="IPR036571">
    <property type="entry name" value="MECDP_synthase_sf"/>
</dbReference>
<dbReference type="NCBIfam" id="TIGR00151">
    <property type="entry name" value="ispF"/>
    <property type="match status" value="1"/>
</dbReference>
<dbReference type="PANTHER" id="PTHR43181">
    <property type="entry name" value="2-C-METHYL-D-ERYTHRITOL 2,4-CYCLODIPHOSPHATE SYNTHASE, CHLOROPLASTIC"/>
    <property type="match status" value="1"/>
</dbReference>
<dbReference type="PANTHER" id="PTHR43181:SF1">
    <property type="entry name" value="2-C-METHYL-D-ERYTHRITOL 2,4-CYCLODIPHOSPHATE SYNTHASE, CHLOROPLASTIC"/>
    <property type="match status" value="1"/>
</dbReference>
<dbReference type="Pfam" id="PF02542">
    <property type="entry name" value="YgbB"/>
    <property type="match status" value="1"/>
</dbReference>
<dbReference type="SUPFAM" id="SSF69765">
    <property type="entry name" value="IpsF-like"/>
    <property type="match status" value="1"/>
</dbReference>
<dbReference type="PROSITE" id="PS01350">
    <property type="entry name" value="ISPF"/>
    <property type="match status" value="1"/>
</dbReference>